<organism>
    <name type="scientific">Komagataella phaffii (strain GS115 / ATCC 20864)</name>
    <name type="common">Yeast</name>
    <name type="synonym">Pichia pastoris</name>
    <dbReference type="NCBI Taxonomy" id="644223"/>
    <lineage>
        <taxon>Eukaryota</taxon>
        <taxon>Fungi</taxon>
        <taxon>Dikarya</taxon>
        <taxon>Ascomycota</taxon>
        <taxon>Saccharomycotina</taxon>
        <taxon>Pichiomycetes</taxon>
        <taxon>Pichiales</taxon>
        <taxon>Pichiaceae</taxon>
        <taxon>Komagataella</taxon>
    </lineage>
</organism>
<protein>
    <recommendedName>
        <fullName evidence="1">Methionine aminopeptidase 2</fullName>
        <shortName evidence="1">MAP 2</shortName>
        <shortName evidence="1">MetAP 2</shortName>
        <ecNumber evidence="1">3.4.11.18</ecNumber>
    </recommendedName>
    <alternativeName>
        <fullName evidence="1">Peptidase M</fullName>
    </alternativeName>
</protein>
<accession>C4R2P3</accession>
<gene>
    <name evidence="1" type="primary">MAP2</name>
    <name type="ordered locus">PAS_chr2-2_0159</name>
</gene>
<dbReference type="EC" id="3.4.11.18" evidence="1"/>
<dbReference type="EMBL" id="FN392320">
    <property type="protein sequence ID" value="CAY69767.1"/>
    <property type="molecule type" value="Genomic_DNA"/>
</dbReference>
<dbReference type="RefSeq" id="XP_002492047.1">
    <property type="nucleotide sequence ID" value="XM_002492002.1"/>
</dbReference>
<dbReference type="SMR" id="C4R2P3"/>
<dbReference type="FunCoup" id="C4R2P3">
    <property type="interactions" value="1183"/>
</dbReference>
<dbReference type="STRING" id="644223.C4R2P3"/>
<dbReference type="EnsemblFungi" id="CAY69767">
    <property type="protein sequence ID" value="CAY69767"/>
    <property type="gene ID" value="PAS_chr2-2_0159"/>
</dbReference>
<dbReference type="GeneID" id="8198269"/>
<dbReference type="KEGG" id="ppa:PAS_chr2-2_0159"/>
<dbReference type="eggNOG" id="KOG2775">
    <property type="taxonomic scope" value="Eukaryota"/>
</dbReference>
<dbReference type="HOGENOM" id="CLU_015857_7_1_1"/>
<dbReference type="InParanoid" id="C4R2P3"/>
<dbReference type="OMA" id="PFAKRWL"/>
<dbReference type="OrthoDB" id="7848262at2759"/>
<dbReference type="Proteomes" id="UP000000314">
    <property type="component" value="Chromosome 2"/>
</dbReference>
<dbReference type="GO" id="GO:0005737">
    <property type="term" value="C:cytoplasm"/>
    <property type="evidence" value="ECO:0007669"/>
    <property type="project" value="UniProtKB-SubCell"/>
</dbReference>
<dbReference type="GO" id="GO:0004239">
    <property type="term" value="F:initiator methionyl aminopeptidase activity"/>
    <property type="evidence" value="ECO:0007669"/>
    <property type="project" value="UniProtKB-UniRule"/>
</dbReference>
<dbReference type="GO" id="GO:0046872">
    <property type="term" value="F:metal ion binding"/>
    <property type="evidence" value="ECO:0007669"/>
    <property type="project" value="UniProtKB-UniRule"/>
</dbReference>
<dbReference type="GO" id="GO:0070006">
    <property type="term" value="F:metalloaminopeptidase activity"/>
    <property type="evidence" value="ECO:0007669"/>
    <property type="project" value="UniProtKB-UniRule"/>
</dbReference>
<dbReference type="GO" id="GO:0051604">
    <property type="term" value="P:protein maturation"/>
    <property type="evidence" value="ECO:0007669"/>
    <property type="project" value="EnsemblFungi"/>
</dbReference>
<dbReference type="GO" id="GO:0006508">
    <property type="term" value="P:proteolysis"/>
    <property type="evidence" value="ECO:0007669"/>
    <property type="project" value="UniProtKB-KW"/>
</dbReference>
<dbReference type="CDD" id="cd01088">
    <property type="entry name" value="MetAP2"/>
    <property type="match status" value="1"/>
</dbReference>
<dbReference type="Gene3D" id="3.90.230.10">
    <property type="entry name" value="Creatinase/methionine aminopeptidase superfamily"/>
    <property type="match status" value="1"/>
</dbReference>
<dbReference type="Gene3D" id="1.10.10.10">
    <property type="entry name" value="Winged helix-like DNA-binding domain superfamily/Winged helix DNA-binding domain"/>
    <property type="match status" value="1"/>
</dbReference>
<dbReference type="HAMAP" id="MF_03175">
    <property type="entry name" value="MetAP_2_euk"/>
    <property type="match status" value="1"/>
</dbReference>
<dbReference type="InterPro" id="IPR036005">
    <property type="entry name" value="Creatinase/aminopeptidase-like"/>
</dbReference>
<dbReference type="InterPro" id="IPR050247">
    <property type="entry name" value="Met_Aminopeptidase_Type2"/>
</dbReference>
<dbReference type="InterPro" id="IPR000994">
    <property type="entry name" value="Pept_M24"/>
</dbReference>
<dbReference type="InterPro" id="IPR001714">
    <property type="entry name" value="Pept_M24_MAP"/>
</dbReference>
<dbReference type="InterPro" id="IPR002468">
    <property type="entry name" value="Pept_M24A_MAP2"/>
</dbReference>
<dbReference type="InterPro" id="IPR018349">
    <property type="entry name" value="Pept_M24A_MAP2_BS"/>
</dbReference>
<dbReference type="InterPro" id="IPR036388">
    <property type="entry name" value="WH-like_DNA-bd_sf"/>
</dbReference>
<dbReference type="InterPro" id="IPR036390">
    <property type="entry name" value="WH_DNA-bd_sf"/>
</dbReference>
<dbReference type="NCBIfam" id="TIGR00501">
    <property type="entry name" value="met_pdase_II"/>
    <property type="match status" value="1"/>
</dbReference>
<dbReference type="PANTHER" id="PTHR45777">
    <property type="entry name" value="METHIONINE AMINOPEPTIDASE 2"/>
    <property type="match status" value="1"/>
</dbReference>
<dbReference type="PANTHER" id="PTHR45777:SF2">
    <property type="entry name" value="METHIONINE AMINOPEPTIDASE 2"/>
    <property type="match status" value="1"/>
</dbReference>
<dbReference type="Pfam" id="PF00557">
    <property type="entry name" value="Peptidase_M24"/>
    <property type="match status" value="1"/>
</dbReference>
<dbReference type="PRINTS" id="PR00599">
    <property type="entry name" value="MAPEPTIDASE"/>
</dbReference>
<dbReference type="SUPFAM" id="SSF55920">
    <property type="entry name" value="Creatinase/aminopeptidase"/>
    <property type="match status" value="1"/>
</dbReference>
<dbReference type="SUPFAM" id="SSF46785">
    <property type="entry name" value="Winged helix' DNA-binding domain"/>
    <property type="match status" value="1"/>
</dbReference>
<dbReference type="PROSITE" id="PS01202">
    <property type="entry name" value="MAP_2"/>
    <property type="match status" value="1"/>
</dbReference>
<comment type="function">
    <text evidence="1">Cotranslationally removes the N-terminal methionine from nascent proteins. The N-terminal methionine is often cleaved when the second residue in the primary sequence is small and uncharged (Met-Ala-, Cys, Gly, Pro, Ser, Thr, or Val).</text>
</comment>
<comment type="catalytic activity">
    <reaction evidence="1">
        <text>Release of N-terminal amino acids, preferentially methionine, from peptides and arylamides.</text>
        <dbReference type="EC" id="3.4.11.18"/>
    </reaction>
</comment>
<comment type="cofactor">
    <cofactor evidence="1">
        <name>Co(2+)</name>
        <dbReference type="ChEBI" id="CHEBI:48828"/>
    </cofactor>
    <cofactor evidence="1">
        <name>Zn(2+)</name>
        <dbReference type="ChEBI" id="CHEBI:29105"/>
    </cofactor>
    <cofactor evidence="1">
        <name>Mn(2+)</name>
        <dbReference type="ChEBI" id="CHEBI:29035"/>
    </cofactor>
    <cofactor evidence="1">
        <name>Fe(2+)</name>
        <dbReference type="ChEBI" id="CHEBI:29033"/>
    </cofactor>
    <text evidence="1">Binds 2 divalent metal cations per subunit. Has a high-affinity and a low affinity metal-binding site. The true nature of the physiological cofactor is under debate. The enzyme is active with cobalt, zinc, manganese or divalent iron ions. Most likely, methionine aminopeptidases function as mononuclear Fe(2+)-metalloproteases under physiological conditions, and the catalytically relevant metal-binding site has been assigned to the histidine-containing high-affinity site.</text>
</comment>
<comment type="subcellular location">
    <subcellularLocation>
        <location evidence="1">Cytoplasm</location>
    </subcellularLocation>
</comment>
<comment type="similarity">
    <text evidence="1">Belongs to the peptidase M24A family. Methionine aminopeptidase eukaryotic type 2 subfamily.</text>
</comment>
<reference key="1">
    <citation type="journal article" date="2009" name="Nat. Biotechnol.">
        <title>Genome sequence of the recombinant protein production host Pichia pastoris.</title>
        <authorList>
            <person name="De Schutter K."/>
            <person name="Lin Y.-C."/>
            <person name="Tiels P."/>
            <person name="Van Hecke A."/>
            <person name="Glinka S."/>
            <person name="Weber-Lehmann J."/>
            <person name="Rouze P."/>
            <person name="Van de Peer Y."/>
            <person name="Callewaert N."/>
        </authorList>
    </citation>
    <scope>NUCLEOTIDE SEQUENCE [LARGE SCALE GENOMIC DNA]</scope>
    <source>
        <strain>GS115 / ATCC 20864</strain>
    </source>
</reference>
<proteinExistence type="inferred from homology"/>
<keyword id="KW-0031">Aminopeptidase</keyword>
<keyword id="KW-0963">Cytoplasm</keyword>
<keyword id="KW-0378">Hydrolase</keyword>
<keyword id="KW-0479">Metal-binding</keyword>
<keyword id="KW-0645">Protease</keyword>
<keyword id="KW-1185">Reference proteome</keyword>
<sequence length="448" mass="50204">MTSSVDKVSQKVADVKLGSSKSTKNNKSKGKGKSNKNQVVEDDDEDDFEKALELAMQLDAQKLAQKKADDVPLVEEEEKKVEEKIEQQYDPISTFYPDGNYPQGEVVDYKDDNLYRTTDEEKRALDREKNNKWNEFRKGAEIHRRVRKLAKDEIKPGMSMIEIAELIENAVRGYSGEDGLKGGMGFPCGLSLNHCAAHYSPNANDKLVLNYEDVMKVDFGVHVNGHIIDSAFTLTFDDKYDDLLKAVKDATNTGIREAGIDVRLTDIGEAIQEVMESYEVTLDGETYQVKPIKNLCGHNIGQYRIHGGKSVPIVKNFDNTKMEEGETFAIETFGSTGRGHVIGQGECSHYAKNPDAPANAISSIRVNRAKQLLKTIDENFGTLPFCRRYIDRLGEEKYLLALNQLVKSGVVSDYPPLVDVKGSYTAQYEHTILLRPNVKEVVSRGEDY</sequence>
<feature type="chain" id="PRO_0000407664" description="Methionine aminopeptidase 2">
    <location>
        <begin position="1"/>
        <end position="448"/>
    </location>
</feature>
<feature type="region of interest" description="Disordered" evidence="2">
    <location>
        <begin position="1"/>
        <end position="47"/>
    </location>
</feature>
<feature type="compositionally biased region" description="Basic residues" evidence="2">
    <location>
        <begin position="24"/>
        <end position="34"/>
    </location>
</feature>
<feature type="binding site" evidence="1">
    <location>
        <position position="198"/>
    </location>
    <ligand>
        <name>substrate</name>
    </ligand>
</feature>
<feature type="binding site" evidence="1">
    <location>
        <position position="218"/>
    </location>
    <ligand>
        <name>a divalent metal cation</name>
        <dbReference type="ChEBI" id="CHEBI:60240"/>
        <label>1</label>
    </ligand>
</feature>
<feature type="binding site" evidence="1">
    <location>
        <position position="229"/>
    </location>
    <ligand>
        <name>a divalent metal cation</name>
        <dbReference type="ChEBI" id="CHEBI:60240"/>
        <label>1</label>
    </ligand>
</feature>
<feature type="binding site" evidence="1">
    <location>
        <position position="229"/>
    </location>
    <ligand>
        <name>a divalent metal cation</name>
        <dbReference type="ChEBI" id="CHEBI:60240"/>
        <label>2</label>
        <note>catalytic</note>
    </ligand>
</feature>
<feature type="binding site" evidence="1">
    <location>
        <position position="298"/>
    </location>
    <ligand>
        <name>a divalent metal cation</name>
        <dbReference type="ChEBI" id="CHEBI:60240"/>
        <label>2</label>
        <note>catalytic</note>
    </ligand>
</feature>
<feature type="binding site" evidence="1">
    <location>
        <position position="306"/>
    </location>
    <ligand>
        <name>substrate</name>
    </ligand>
</feature>
<feature type="binding site" evidence="1">
    <location>
        <position position="331"/>
    </location>
    <ligand>
        <name>a divalent metal cation</name>
        <dbReference type="ChEBI" id="CHEBI:60240"/>
        <label>2</label>
        <note>catalytic</note>
    </ligand>
</feature>
<feature type="binding site" evidence="1">
    <location>
        <position position="429"/>
    </location>
    <ligand>
        <name>a divalent metal cation</name>
        <dbReference type="ChEBI" id="CHEBI:60240"/>
        <label>1</label>
    </ligand>
</feature>
<feature type="binding site" evidence="1">
    <location>
        <position position="429"/>
    </location>
    <ligand>
        <name>a divalent metal cation</name>
        <dbReference type="ChEBI" id="CHEBI:60240"/>
        <label>2</label>
        <note>catalytic</note>
    </ligand>
</feature>
<evidence type="ECO:0000255" key="1">
    <source>
        <dbReference type="HAMAP-Rule" id="MF_03175"/>
    </source>
</evidence>
<evidence type="ECO:0000256" key="2">
    <source>
        <dbReference type="SAM" id="MobiDB-lite"/>
    </source>
</evidence>
<name>MAP2_KOMPG</name>